<accession>Q06H00</accession>
<evidence type="ECO:0000255" key="1">
    <source>
        <dbReference type="HAMAP-Rule" id="MF_00644"/>
    </source>
</evidence>
<gene>
    <name evidence="1" type="primary">psbZ</name>
</gene>
<feature type="chain" id="PRO_0000277215" description="Photosystem II reaction center protein Z">
    <location>
        <begin position="1"/>
        <end position="62"/>
    </location>
</feature>
<feature type="transmembrane region" description="Helical" evidence="1">
    <location>
        <begin position="8"/>
        <end position="28"/>
    </location>
</feature>
<feature type="transmembrane region" description="Helical" evidence="1">
    <location>
        <begin position="41"/>
        <end position="61"/>
    </location>
</feature>
<protein>
    <recommendedName>
        <fullName evidence="1">Photosystem II reaction center protein Z</fullName>
        <shortName evidence="1">PSII-Z</shortName>
    </recommendedName>
</protein>
<proteinExistence type="inferred from homology"/>
<name>PSBZ_DRIGR</name>
<keyword id="KW-0150">Chloroplast</keyword>
<keyword id="KW-0472">Membrane</keyword>
<keyword id="KW-0602">Photosynthesis</keyword>
<keyword id="KW-0604">Photosystem II</keyword>
<keyword id="KW-0934">Plastid</keyword>
<keyword id="KW-0674">Reaction center</keyword>
<keyword id="KW-0793">Thylakoid</keyword>
<keyword id="KW-0812">Transmembrane</keyword>
<keyword id="KW-1133">Transmembrane helix</keyword>
<sequence length="62" mass="6559">MTIAFQLALFALIATSSILLISVPIVFASSDGWSSNKNVVFSGTSLWIGLVFLVAILNSLIS</sequence>
<organism>
    <name type="scientific">Drimys granadensis</name>
    <dbReference type="NCBI Taxonomy" id="224735"/>
    <lineage>
        <taxon>Eukaryota</taxon>
        <taxon>Viridiplantae</taxon>
        <taxon>Streptophyta</taxon>
        <taxon>Embryophyta</taxon>
        <taxon>Tracheophyta</taxon>
        <taxon>Spermatophyta</taxon>
        <taxon>Magnoliopsida</taxon>
        <taxon>Magnoliidae</taxon>
        <taxon>Canellales</taxon>
        <taxon>Winteraceae</taxon>
        <taxon>Drimys</taxon>
    </lineage>
</organism>
<dbReference type="EMBL" id="DQ887676">
    <property type="protein sequence ID" value="ABH88294.1"/>
    <property type="molecule type" value="Genomic_DNA"/>
</dbReference>
<dbReference type="RefSeq" id="YP_784383.1">
    <property type="nucleotide sequence ID" value="NC_008456.1"/>
</dbReference>
<dbReference type="SMR" id="Q06H00"/>
<dbReference type="GeneID" id="4363545"/>
<dbReference type="GO" id="GO:0009535">
    <property type="term" value="C:chloroplast thylakoid membrane"/>
    <property type="evidence" value="ECO:0007669"/>
    <property type="project" value="UniProtKB-SubCell"/>
</dbReference>
<dbReference type="GO" id="GO:0009539">
    <property type="term" value="C:photosystem II reaction center"/>
    <property type="evidence" value="ECO:0007669"/>
    <property type="project" value="InterPro"/>
</dbReference>
<dbReference type="GO" id="GO:0015979">
    <property type="term" value="P:photosynthesis"/>
    <property type="evidence" value="ECO:0007669"/>
    <property type="project" value="UniProtKB-UniRule"/>
</dbReference>
<dbReference type="GO" id="GO:0042549">
    <property type="term" value="P:photosystem II stabilization"/>
    <property type="evidence" value="ECO:0007669"/>
    <property type="project" value="InterPro"/>
</dbReference>
<dbReference type="FunFam" id="1.10.287.740:FF:000001">
    <property type="entry name" value="Photosystem II reaction center protein Z"/>
    <property type="match status" value="1"/>
</dbReference>
<dbReference type="Gene3D" id="1.10.287.740">
    <property type="entry name" value="Photosystem II PsbZ, reaction centre"/>
    <property type="match status" value="1"/>
</dbReference>
<dbReference type="HAMAP" id="MF_00644">
    <property type="entry name" value="PSII_PsbZ"/>
    <property type="match status" value="1"/>
</dbReference>
<dbReference type="InterPro" id="IPR002644">
    <property type="entry name" value="PSII_PsbZ"/>
</dbReference>
<dbReference type="InterPro" id="IPR036512">
    <property type="entry name" value="PSII_PsbZ_sf"/>
</dbReference>
<dbReference type="NCBIfam" id="TIGR03043">
    <property type="entry name" value="PS_II_psbZ"/>
    <property type="match status" value="1"/>
</dbReference>
<dbReference type="PANTHER" id="PTHR34971">
    <property type="entry name" value="PHOTOSYSTEM II REACTION CENTER PROTEIN Z"/>
    <property type="match status" value="1"/>
</dbReference>
<dbReference type="PANTHER" id="PTHR34971:SF2">
    <property type="entry name" value="PHOTOSYSTEM II REACTION CENTER PROTEIN Z"/>
    <property type="match status" value="1"/>
</dbReference>
<dbReference type="Pfam" id="PF01737">
    <property type="entry name" value="Ycf9"/>
    <property type="match status" value="1"/>
</dbReference>
<dbReference type="SUPFAM" id="SSF161055">
    <property type="entry name" value="PsbZ-like"/>
    <property type="match status" value="1"/>
</dbReference>
<comment type="function">
    <text evidence="1">May control the interaction of photosystem II (PSII) cores with the light-harvesting antenna, regulates electron flow through the 2 photosystem reaction centers. PSII is a light-driven water plastoquinone oxidoreductase, using light energy to abstract electrons from H(2)O, generating a proton gradient subsequently used for ATP formation.</text>
</comment>
<comment type="subunit">
    <text evidence="1">PSII is composed of 1 copy each of membrane proteins PsbA, PsbB, PsbC, PsbD, PsbE, PsbF, PsbH, PsbI, PsbJ, PsbK, PsbL, PsbM, PsbT, PsbY, PsbZ, Psb30/Ycf12, at least 3 peripheral proteins of the oxygen-evolving complex and a large number of cofactors. It forms dimeric complexes.</text>
</comment>
<comment type="subcellular location">
    <subcellularLocation>
        <location evidence="1">Plastid</location>
        <location evidence="1">Chloroplast thylakoid membrane</location>
        <topology evidence="1">Multi-pass membrane protein</topology>
    </subcellularLocation>
</comment>
<comment type="similarity">
    <text evidence="1">Belongs to the PsbZ family.</text>
</comment>
<geneLocation type="chloroplast"/>
<reference key="1">
    <citation type="journal article" date="2006" name="BMC Evol. Biol.">
        <title>Complete plastid genome sequences of Drimys, Liriodendron, and Piper: implications for the phylogenetic relationships of magnoliids.</title>
        <authorList>
            <person name="Cai Z."/>
            <person name="Penaflor C."/>
            <person name="Kuehl J.V."/>
            <person name="Leebens-Mack J."/>
            <person name="Carlson J.E."/>
            <person name="dePamphilis C.W."/>
            <person name="Boore J.L."/>
            <person name="Jansen R.K."/>
        </authorList>
    </citation>
    <scope>NUCLEOTIDE SEQUENCE [LARGE SCALE GENOMIC DNA]</scope>
</reference>